<name>MSCL_BACC0</name>
<proteinExistence type="inferred from homology"/>
<evidence type="ECO:0000255" key="1">
    <source>
        <dbReference type="HAMAP-Rule" id="MF_00115"/>
    </source>
</evidence>
<dbReference type="EMBL" id="CP001283">
    <property type="protein sequence ID" value="ACK90573.1"/>
    <property type="molecule type" value="Genomic_DNA"/>
</dbReference>
<dbReference type="RefSeq" id="WP_000267000.1">
    <property type="nucleotide sequence ID" value="NC_011773.1"/>
</dbReference>
<dbReference type="SMR" id="B7JS48"/>
<dbReference type="KEGG" id="bcu:BCAH820_4790"/>
<dbReference type="HOGENOM" id="CLU_095787_0_0_9"/>
<dbReference type="Proteomes" id="UP000001363">
    <property type="component" value="Chromosome"/>
</dbReference>
<dbReference type="GO" id="GO:0005886">
    <property type="term" value="C:plasma membrane"/>
    <property type="evidence" value="ECO:0007669"/>
    <property type="project" value="UniProtKB-SubCell"/>
</dbReference>
<dbReference type="GO" id="GO:0008381">
    <property type="term" value="F:mechanosensitive monoatomic ion channel activity"/>
    <property type="evidence" value="ECO:0007669"/>
    <property type="project" value="UniProtKB-UniRule"/>
</dbReference>
<dbReference type="FunFam" id="1.10.1200.120:FF:000001">
    <property type="entry name" value="Large-conductance mechanosensitive channel"/>
    <property type="match status" value="1"/>
</dbReference>
<dbReference type="Gene3D" id="1.10.1200.120">
    <property type="entry name" value="Large-conductance mechanosensitive channel, MscL, domain 1"/>
    <property type="match status" value="1"/>
</dbReference>
<dbReference type="HAMAP" id="MF_00115">
    <property type="entry name" value="MscL"/>
    <property type="match status" value="1"/>
</dbReference>
<dbReference type="InterPro" id="IPR019823">
    <property type="entry name" value="Mechanosensitive_channel_CS"/>
</dbReference>
<dbReference type="InterPro" id="IPR001185">
    <property type="entry name" value="MS_channel"/>
</dbReference>
<dbReference type="InterPro" id="IPR037673">
    <property type="entry name" value="MSC/AndL"/>
</dbReference>
<dbReference type="InterPro" id="IPR036019">
    <property type="entry name" value="MscL_channel"/>
</dbReference>
<dbReference type="NCBIfam" id="TIGR00220">
    <property type="entry name" value="mscL"/>
    <property type="match status" value="1"/>
</dbReference>
<dbReference type="NCBIfam" id="NF001843">
    <property type="entry name" value="PRK00567.1-4"/>
    <property type="match status" value="1"/>
</dbReference>
<dbReference type="NCBIfam" id="NF010560">
    <property type="entry name" value="PRK13955.1"/>
    <property type="match status" value="1"/>
</dbReference>
<dbReference type="PANTHER" id="PTHR30266:SF2">
    <property type="entry name" value="LARGE-CONDUCTANCE MECHANOSENSITIVE CHANNEL"/>
    <property type="match status" value="1"/>
</dbReference>
<dbReference type="PANTHER" id="PTHR30266">
    <property type="entry name" value="MECHANOSENSITIVE CHANNEL MSCL"/>
    <property type="match status" value="1"/>
</dbReference>
<dbReference type="Pfam" id="PF01741">
    <property type="entry name" value="MscL"/>
    <property type="match status" value="1"/>
</dbReference>
<dbReference type="PRINTS" id="PR01264">
    <property type="entry name" value="MECHCHANNEL"/>
</dbReference>
<dbReference type="SUPFAM" id="SSF81330">
    <property type="entry name" value="Gated mechanosensitive channel"/>
    <property type="match status" value="1"/>
</dbReference>
<dbReference type="PROSITE" id="PS01327">
    <property type="entry name" value="MSCL"/>
    <property type="match status" value="1"/>
</dbReference>
<reference key="1">
    <citation type="submission" date="2008-10" db="EMBL/GenBank/DDBJ databases">
        <title>Genome sequence of Bacillus cereus AH820.</title>
        <authorList>
            <person name="Dodson R.J."/>
            <person name="Durkin A.S."/>
            <person name="Rosovitz M.J."/>
            <person name="Rasko D.A."/>
            <person name="Hoffmaster A."/>
            <person name="Ravel J."/>
            <person name="Sutton G."/>
        </authorList>
    </citation>
    <scope>NUCLEOTIDE SEQUENCE [LARGE SCALE GENOMIC DNA]</scope>
    <source>
        <strain>AH820</strain>
    </source>
</reference>
<accession>B7JS48</accession>
<organism>
    <name type="scientific">Bacillus cereus (strain AH820)</name>
    <dbReference type="NCBI Taxonomy" id="405535"/>
    <lineage>
        <taxon>Bacteria</taxon>
        <taxon>Bacillati</taxon>
        <taxon>Bacillota</taxon>
        <taxon>Bacilli</taxon>
        <taxon>Bacillales</taxon>
        <taxon>Bacillaceae</taxon>
        <taxon>Bacillus</taxon>
        <taxon>Bacillus cereus group</taxon>
    </lineage>
</organism>
<sequence length="132" mass="14811">MWNEFKKFAFKGNVIDLAVGVVIGAAFGKIVSSLVKDIITPLLGMVLGGVDFTDLKITFGKSSIMYGNFIQTIFDFLIIAAAIFMFVKVFNKLTSKREEEKEEEIPEPTKEEEILGEIRDLLKQQNSSKDRA</sequence>
<comment type="function">
    <text evidence="1">Channel that opens in response to stretch forces in the membrane lipid bilayer. May participate in the regulation of osmotic pressure changes within the cell.</text>
</comment>
<comment type="subunit">
    <text evidence="1">Homopentamer.</text>
</comment>
<comment type="subcellular location">
    <subcellularLocation>
        <location evidence="1">Cell membrane</location>
        <topology evidence="1">Multi-pass membrane protein</topology>
    </subcellularLocation>
</comment>
<comment type="similarity">
    <text evidence="1">Belongs to the MscL family.</text>
</comment>
<keyword id="KW-1003">Cell membrane</keyword>
<keyword id="KW-0407">Ion channel</keyword>
<keyword id="KW-0406">Ion transport</keyword>
<keyword id="KW-0472">Membrane</keyword>
<keyword id="KW-0812">Transmembrane</keyword>
<keyword id="KW-1133">Transmembrane helix</keyword>
<keyword id="KW-0813">Transport</keyword>
<protein>
    <recommendedName>
        <fullName evidence="1">Large-conductance mechanosensitive channel</fullName>
    </recommendedName>
</protein>
<feature type="chain" id="PRO_1000117549" description="Large-conductance mechanosensitive channel">
    <location>
        <begin position="1"/>
        <end position="132"/>
    </location>
</feature>
<feature type="transmembrane region" description="Helical" evidence="1">
    <location>
        <begin position="14"/>
        <end position="34"/>
    </location>
</feature>
<feature type="transmembrane region" description="Helical" evidence="1">
    <location>
        <begin position="67"/>
        <end position="87"/>
    </location>
</feature>
<gene>
    <name evidence="1" type="primary">mscL</name>
    <name type="ordered locus">BCAH820_4790</name>
</gene>